<keyword id="KW-0002">3D-structure</keyword>
<keyword id="KW-0084">Basement membrane</keyword>
<keyword id="KW-0130">Cell adhesion</keyword>
<keyword id="KW-0175">Coiled coil</keyword>
<keyword id="KW-0903">Direct protein sequencing</keyword>
<keyword id="KW-1015">Disulfide bond</keyword>
<keyword id="KW-0272">Extracellular matrix</keyword>
<keyword id="KW-0325">Glycoprotein</keyword>
<keyword id="KW-0424">Laminin EGF-like domain</keyword>
<keyword id="KW-1185">Reference proteome</keyword>
<keyword id="KW-0677">Repeat</keyword>
<keyword id="KW-0964">Secreted</keyword>
<keyword id="KW-0732">Signal</keyword>
<reference key="1">
    <citation type="journal article" date="1995" name="Matrix Biol.">
        <title>Cloning and expression of laminin alpha 2 chain (M-chain) in the mouse.</title>
        <authorList>
            <person name="Bernier S.M."/>
            <person name="Utani A."/>
            <person name="Sugiyama S."/>
            <person name="Doi T."/>
            <person name="Polistina C."/>
            <person name="Yamada Y."/>
        </authorList>
    </citation>
    <scope>NUCLEOTIDE SEQUENCE [MRNA]</scope>
    <source>
        <strain>FVB/N</strain>
        <tissue>Embryo</tissue>
        <tissue>Heart</tissue>
    </source>
</reference>
<reference key="2">
    <citation type="journal article" date="2009" name="PLoS Biol.">
        <title>Lineage-specific biology revealed by a finished genome assembly of the mouse.</title>
        <authorList>
            <person name="Church D.M."/>
            <person name="Goodstadt L."/>
            <person name="Hillier L.W."/>
            <person name="Zody M.C."/>
            <person name="Goldstein S."/>
            <person name="She X."/>
            <person name="Bult C.J."/>
            <person name="Agarwala R."/>
            <person name="Cherry J.L."/>
            <person name="DiCuccio M."/>
            <person name="Hlavina W."/>
            <person name="Kapustin Y."/>
            <person name="Meric P."/>
            <person name="Maglott D."/>
            <person name="Birtle Z."/>
            <person name="Marques A.C."/>
            <person name="Graves T."/>
            <person name="Zhou S."/>
            <person name="Teague B."/>
            <person name="Potamousis K."/>
            <person name="Churas C."/>
            <person name="Place M."/>
            <person name="Herschleb J."/>
            <person name="Runnheim R."/>
            <person name="Forrest D."/>
            <person name="Amos-Landgraf J."/>
            <person name="Schwartz D.C."/>
            <person name="Cheng Z."/>
            <person name="Lindblad-Toh K."/>
            <person name="Eichler E.E."/>
            <person name="Ponting C.P."/>
        </authorList>
    </citation>
    <scope>NUCLEOTIDE SEQUENCE [LARGE SCALE GENOMIC DNA]</scope>
    <source>
        <strain>C57BL/6J</strain>
    </source>
</reference>
<reference key="3">
    <citation type="journal article" date="1993" name="J. Immunol.">
        <title>Expression of merosin in the thymus and its interaction with thymocytes.</title>
        <authorList>
            <person name="Chang A.C."/>
            <person name="Wadsworth S."/>
            <person name="Coligan J.E."/>
        </authorList>
    </citation>
    <scope>NUCLEOTIDE SEQUENCE [MRNA] OF 2162-2279</scope>
    <source>
        <strain>C57BL/6J</strain>
        <tissue>Thymus</tissue>
    </source>
</reference>
<reference key="4">
    <citation type="journal article" date="1994" name="Nat. Genet.">
        <title>Murine muscular dystrophy caused by a mutation in the laminin alpha 2 (Lama2) gene.</title>
        <authorList>
            <person name="Xu H."/>
            <person name="Wu X.R."/>
            <person name="Wewer U.M."/>
            <person name="Engvall E."/>
        </authorList>
    </citation>
    <scope>NUCLEOTIDE SEQUENCE [MRNA] OF 64-281</scope>
</reference>
<reference key="5">
    <citation type="journal article" date="2002" name="Biochem. J.">
        <title>Complete sequence, recombinant analysis and binding to laminins and sulphated ligands of the N-terminal domains of laminin alpha3B and alpha5 chains.</title>
        <authorList>
            <person name="Garbe J.H."/>
            <person name="Gohring W."/>
            <person name="Mann K."/>
            <person name="Timpl R."/>
            <person name="Sasaki T."/>
        </authorList>
    </citation>
    <scope>PROTEIN SEQUENCE OF 20-25</scope>
</reference>
<reference key="6">
    <citation type="journal article" date="1999" name="EMBO J.">
        <title>Binding of the G domains of laminin alpha1 and alpha2 chains and perlecan to heparin, sulfatides, alpha-dystroglycan and several extracellular matrix proteins.</title>
        <authorList>
            <person name="Talts J.F."/>
            <person name="Andac Z."/>
            <person name="Goehring W."/>
            <person name="Brancaccio A."/>
            <person name="Timpl R."/>
        </authorList>
    </citation>
    <scope>INTERACTION WITH FBLN1; FBLN2 AND NID2</scope>
</reference>
<reference key="7">
    <citation type="journal article" date="2010" name="Cell">
        <title>A tissue-specific atlas of mouse protein phosphorylation and expression.</title>
        <authorList>
            <person name="Huttlin E.L."/>
            <person name="Jedrychowski M.P."/>
            <person name="Elias J.E."/>
            <person name="Goswami T."/>
            <person name="Rad R."/>
            <person name="Beausoleil S.A."/>
            <person name="Villen J."/>
            <person name="Haas W."/>
            <person name="Sowa M.E."/>
            <person name="Gygi S.P."/>
        </authorList>
    </citation>
    <scope>IDENTIFICATION BY MASS SPECTROMETRY [LARGE SCALE ANALYSIS]</scope>
    <source>
        <tissue>Brown adipose tissue</tissue>
        <tissue>Heart</tissue>
        <tissue>Kidney</tissue>
        <tissue>Liver</tissue>
        <tissue>Lung</tissue>
        <tissue>Pancreas</tissue>
        <tissue>Spleen</tissue>
        <tissue>Testis</tissue>
    </source>
</reference>
<reference key="8">
    <citation type="journal article" date="1999" name="Mol. Cell">
        <title>The crystal structure of a laminin G-like module reveals the molecular basis of alpha-dystroglycan binding to laminins, perlecan, and agrin.</title>
        <authorList>
            <person name="Hohenester E."/>
            <person name="Tisi D."/>
            <person name="Talts J.F."/>
            <person name="Timpl R."/>
        </authorList>
    </citation>
    <scope>X-RAY CRYSTALLOGRAPHY (2.35 ANGSTROMS) OF 2932-3106</scope>
</reference>
<dbReference type="EMBL" id="U12147">
    <property type="protein sequence ID" value="AAC52165.1"/>
    <property type="status" value="ALT_FRAME"/>
    <property type="molecule type" value="mRNA"/>
</dbReference>
<dbReference type="EMBL" id="AC101709">
    <property type="status" value="NOT_ANNOTATED_CDS"/>
    <property type="molecule type" value="Genomic_DNA"/>
</dbReference>
<dbReference type="EMBL" id="AC152982">
    <property type="status" value="NOT_ANNOTATED_CDS"/>
    <property type="molecule type" value="Genomic_DNA"/>
</dbReference>
<dbReference type="EMBL" id="AC153800">
    <property type="status" value="NOT_ANNOTATED_CDS"/>
    <property type="molecule type" value="Genomic_DNA"/>
</dbReference>
<dbReference type="EMBL" id="AC155942">
    <property type="status" value="NOT_ANNOTATED_CDS"/>
    <property type="molecule type" value="Genomic_DNA"/>
</dbReference>
<dbReference type="EMBL" id="AC167232">
    <property type="status" value="NOT_ANNOTATED_CDS"/>
    <property type="molecule type" value="Genomic_DNA"/>
</dbReference>
<dbReference type="EMBL" id="AC171406">
    <property type="status" value="NOT_ANNOTATED_CDS"/>
    <property type="molecule type" value="Genomic_DNA"/>
</dbReference>
<dbReference type="EMBL" id="X69869">
    <property type="protein sequence ID" value="CAA49502.1"/>
    <property type="molecule type" value="mRNA"/>
</dbReference>
<dbReference type="EMBL" id="S75315">
    <property type="protein sequence ID" value="AAB33573.1"/>
    <property type="molecule type" value="mRNA"/>
</dbReference>
<dbReference type="CCDS" id="CCDS48526.1"/>
<dbReference type="PIR" id="I49077">
    <property type="entry name" value="S53868"/>
</dbReference>
<dbReference type="RefSeq" id="NP_032507.2">
    <property type="nucleotide sequence ID" value="NM_008481.3"/>
</dbReference>
<dbReference type="PDB" id="1DYK">
    <property type="method" value="X-ray"/>
    <property type="resolution" value="2.00 A"/>
    <property type="chains" value="A=2730-3118"/>
</dbReference>
<dbReference type="PDB" id="1OKQ">
    <property type="method" value="X-ray"/>
    <property type="resolution" value="2.80 A"/>
    <property type="chains" value="A=2730-3118"/>
</dbReference>
<dbReference type="PDB" id="1QU0">
    <property type="method" value="X-ray"/>
    <property type="resolution" value="2.35 A"/>
    <property type="chains" value="A/B/C/D=2932-3118"/>
</dbReference>
<dbReference type="PDB" id="2WJS">
    <property type="method" value="X-ray"/>
    <property type="resolution" value="2.80 A"/>
    <property type="chains" value="A=2136-2749"/>
</dbReference>
<dbReference type="PDB" id="5IK4">
    <property type="method" value="X-ray"/>
    <property type="resolution" value="1.27 A"/>
    <property type="chains" value="A=2730-3118"/>
</dbReference>
<dbReference type="PDB" id="5IK5">
    <property type="method" value="X-ray"/>
    <property type="resolution" value="1.39 A"/>
    <property type="chains" value="A=2730-3118"/>
</dbReference>
<dbReference type="PDB" id="5IK7">
    <property type="method" value="X-ray"/>
    <property type="resolution" value="2.00 A"/>
    <property type="chains" value="A/B=2742-3118"/>
</dbReference>
<dbReference type="PDB" id="5IK8">
    <property type="method" value="X-ray"/>
    <property type="resolution" value="2.00 A"/>
    <property type="chains" value="A/B=2742-3118"/>
</dbReference>
<dbReference type="PDBsum" id="1DYK"/>
<dbReference type="PDBsum" id="1OKQ"/>
<dbReference type="PDBsum" id="1QU0"/>
<dbReference type="PDBsum" id="2WJS"/>
<dbReference type="PDBsum" id="5IK4"/>
<dbReference type="PDBsum" id="5IK5"/>
<dbReference type="PDBsum" id="5IK7"/>
<dbReference type="PDBsum" id="5IK8"/>
<dbReference type="SMR" id="Q60675"/>
<dbReference type="BioGRID" id="201097">
    <property type="interactions" value="4"/>
</dbReference>
<dbReference type="ComplexPortal" id="CPX-3009">
    <property type="entry name" value="Laminin-211 complex"/>
</dbReference>
<dbReference type="ComplexPortal" id="CPX-3011">
    <property type="entry name" value="Laminin-221 complex"/>
</dbReference>
<dbReference type="ComplexPortal" id="CPX-3018">
    <property type="entry name" value="Laminin-213 complex"/>
</dbReference>
<dbReference type="FunCoup" id="Q60675">
    <property type="interactions" value="450"/>
</dbReference>
<dbReference type="IntAct" id="Q60675">
    <property type="interactions" value="1"/>
</dbReference>
<dbReference type="STRING" id="10090.ENSMUSP00000090304"/>
<dbReference type="UniLectin" id="Q60675"/>
<dbReference type="GlyConnect" id="2456">
    <property type="glycosylation" value="11 N-Linked glycans (7 sites)"/>
</dbReference>
<dbReference type="GlyCosmos" id="Q60675">
    <property type="glycosylation" value="29 sites, 11 glycans"/>
</dbReference>
<dbReference type="GlyGen" id="Q60675">
    <property type="glycosylation" value="32 sites, 28 N-linked glycans (25 sites), 1 O-linked glycan (1 site)"/>
</dbReference>
<dbReference type="iPTMnet" id="Q60675"/>
<dbReference type="PhosphoSitePlus" id="Q60675"/>
<dbReference type="SwissPalm" id="Q60675"/>
<dbReference type="CPTAC" id="non-CPTAC-3655"/>
<dbReference type="CPTAC" id="non-CPTAC-3835"/>
<dbReference type="jPOST" id="Q60675"/>
<dbReference type="PaxDb" id="10090-ENSMUSP00000090304"/>
<dbReference type="PeptideAtlas" id="Q60675"/>
<dbReference type="ProteomicsDB" id="265034"/>
<dbReference type="Pumba" id="Q60675"/>
<dbReference type="ABCD" id="Q60675">
    <property type="antibodies" value="1 sequenced antibody"/>
</dbReference>
<dbReference type="Antibodypedia" id="763">
    <property type="antibodies" value="206 antibodies from 33 providers"/>
</dbReference>
<dbReference type="DNASU" id="16773"/>
<dbReference type="Ensembl" id="ENSMUST00000092639.12">
    <property type="protein sequence ID" value="ENSMUSP00000090304.6"/>
    <property type="gene ID" value="ENSMUSG00000019899.18"/>
</dbReference>
<dbReference type="GeneID" id="16773"/>
<dbReference type="KEGG" id="mmu:16773"/>
<dbReference type="UCSC" id="uc007esf.2">
    <property type="organism name" value="mouse"/>
</dbReference>
<dbReference type="AGR" id="MGI:99912"/>
<dbReference type="CTD" id="3908"/>
<dbReference type="MGI" id="MGI:99912">
    <property type="gene designation" value="Lama2"/>
</dbReference>
<dbReference type="VEuPathDB" id="HostDB:ENSMUSG00000019899"/>
<dbReference type="eggNOG" id="KOG1836">
    <property type="taxonomic scope" value="Eukaryota"/>
</dbReference>
<dbReference type="GeneTree" id="ENSGT00940000155362"/>
<dbReference type="HOGENOM" id="CLU_000301_0_0_1"/>
<dbReference type="InParanoid" id="Q60675"/>
<dbReference type="OMA" id="SHSRINF"/>
<dbReference type="OrthoDB" id="10011303at2759"/>
<dbReference type="PhylomeDB" id="Q60675"/>
<dbReference type="TreeFam" id="TF335359"/>
<dbReference type="BioGRID-ORCS" id="16773">
    <property type="hits" value="2 hits in 75 CRISPR screens"/>
</dbReference>
<dbReference type="ChiTaRS" id="Lama2">
    <property type="organism name" value="mouse"/>
</dbReference>
<dbReference type="EvolutionaryTrace" id="Q60675"/>
<dbReference type="PRO" id="PR:Q60675"/>
<dbReference type="Proteomes" id="UP000000589">
    <property type="component" value="Chromosome 10"/>
</dbReference>
<dbReference type="RNAct" id="Q60675">
    <property type="molecule type" value="protein"/>
</dbReference>
<dbReference type="Bgee" id="ENSMUSG00000019899">
    <property type="expression patterns" value="Expressed in sciatic nerve and 188 other cell types or tissues"/>
</dbReference>
<dbReference type="ExpressionAtlas" id="Q60675">
    <property type="expression patterns" value="baseline and differential"/>
</dbReference>
<dbReference type="GO" id="GO:0005604">
    <property type="term" value="C:basement membrane"/>
    <property type="evidence" value="ECO:0000314"/>
    <property type="project" value="MGI"/>
</dbReference>
<dbReference type="GO" id="GO:0062023">
    <property type="term" value="C:collagen-containing extracellular matrix"/>
    <property type="evidence" value="ECO:0007005"/>
    <property type="project" value="BHF-UCL"/>
</dbReference>
<dbReference type="GO" id="GO:0043197">
    <property type="term" value="C:dendritic spine"/>
    <property type="evidence" value="ECO:0007669"/>
    <property type="project" value="Ensembl"/>
</dbReference>
<dbReference type="GO" id="GO:0005576">
    <property type="term" value="C:extracellular region"/>
    <property type="evidence" value="ECO:0000304"/>
    <property type="project" value="Reactome"/>
</dbReference>
<dbReference type="GO" id="GO:0031594">
    <property type="term" value="C:neuromuscular junction"/>
    <property type="evidence" value="ECO:0000314"/>
    <property type="project" value="SynGO"/>
</dbReference>
<dbReference type="GO" id="GO:0098637">
    <property type="term" value="C:protein complex involved in cell-matrix adhesion"/>
    <property type="evidence" value="ECO:0000303"/>
    <property type="project" value="ComplexPortal"/>
</dbReference>
<dbReference type="GO" id="GO:0042383">
    <property type="term" value="C:sarcolemma"/>
    <property type="evidence" value="ECO:0000314"/>
    <property type="project" value="MGI"/>
</dbReference>
<dbReference type="GO" id="GO:0043083">
    <property type="term" value="C:synaptic cleft"/>
    <property type="evidence" value="ECO:0000314"/>
    <property type="project" value="SynGO"/>
</dbReference>
<dbReference type="GO" id="GO:0005102">
    <property type="term" value="F:signaling receptor binding"/>
    <property type="evidence" value="ECO:0007669"/>
    <property type="project" value="InterPro"/>
</dbReference>
<dbReference type="GO" id="GO:0007411">
    <property type="term" value="P:axon guidance"/>
    <property type="evidence" value="ECO:0000316"/>
    <property type="project" value="MGI"/>
</dbReference>
<dbReference type="GO" id="GO:0007155">
    <property type="term" value="P:cell adhesion"/>
    <property type="evidence" value="ECO:0007669"/>
    <property type="project" value="UniProtKB-KW"/>
</dbReference>
<dbReference type="GO" id="GO:0045785">
    <property type="term" value="P:positive regulation of cell adhesion"/>
    <property type="evidence" value="ECO:0000303"/>
    <property type="project" value="ComplexPortal"/>
</dbReference>
<dbReference type="GO" id="GO:2001046">
    <property type="term" value="P:positive regulation of integrin-mediated signaling pathway"/>
    <property type="evidence" value="ECO:0000303"/>
    <property type="project" value="ComplexPortal"/>
</dbReference>
<dbReference type="GO" id="GO:0051149">
    <property type="term" value="P:positive regulation of muscle cell differentiation"/>
    <property type="evidence" value="ECO:0000303"/>
    <property type="project" value="ComplexPortal"/>
</dbReference>
<dbReference type="GO" id="GO:0032224">
    <property type="term" value="P:positive regulation of synaptic transmission, cholinergic"/>
    <property type="evidence" value="ECO:0000315"/>
    <property type="project" value="MGI"/>
</dbReference>
<dbReference type="GO" id="GO:0110011">
    <property type="term" value="P:regulation of basement membrane organization"/>
    <property type="evidence" value="ECO:0000303"/>
    <property type="project" value="ComplexPortal"/>
</dbReference>
<dbReference type="GO" id="GO:0030334">
    <property type="term" value="P:regulation of cell migration"/>
    <property type="evidence" value="ECO:0007669"/>
    <property type="project" value="InterPro"/>
</dbReference>
<dbReference type="GO" id="GO:0045995">
    <property type="term" value="P:regulation of embryonic development"/>
    <property type="evidence" value="ECO:0007669"/>
    <property type="project" value="InterPro"/>
</dbReference>
<dbReference type="GO" id="GO:0014037">
    <property type="term" value="P:Schwann cell differentiation"/>
    <property type="evidence" value="ECO:0007669"/>
    <property type="project" value="Ensembl"/>
</dbReference>
<dbReference type="CDD" id="cd00055">
    <property type="entry name" value="EGF_Lam"/>
    <property type="match status" value="16"/>
</dbReference>
<dbReference type="CDD" id="cd00110">
    <property type="entry name" value="LamG"/>
    <property type="match status" value="5"/>
</dbReference>
<dbReference type="FunFam" id="2.10.25.10:FF:000106">
    <property type="entry name" value="Heparan sulfate proteoglycan 2"/>
    <property type="match status" value="1"/>
</dbReference>
<dbReference type="FunFam" id="2.10.25.10:FF:000074">
    <property type="entry name" value="Laminin subunit alpha"/>
    <property type="match status" value="1"/>
</dbReference>
<dbReference type="FunFam" id="2.10.25.10:FF:000069">
    <property type="entry name" value="Laminin subunit alpha 1"/>
    <property type="match status" value="1"/>
</dbReference>
<dbReference type="FunFam" id="2.10.25.10:FF:000082">
    <property type="entry name" value="Laminin subunit alpha 1"/>
    <property type="match status" value="1"/>
</dbReference>
<dbReference type="FunFam" id="2.10.25.10:FF:000242">
    <property type="entry name" value="Laminin subunit alpha 1"/>
    <property type="match status" value="1"/>
</dbReference>
<dbReference type="FunFam" id="2.10.25.10:FF:000512">
    <property type="entry name" value="Laminin subunit alpha 1"/>
    <property type="match status" value="1"/>
</dbReference>
<dbReference type="FunFam" id="2.10.25.10:FF:000189">
    <property type="entry name" value="Laminin subunit alpha 2"/>
    <property type="match status" value="1"/>
</dbReference>
<dbReference type="FunFam" id="2.10.25.10:FF:000250">
    <property type="entry name" value="Laminin subunit alpha 2"/>
    <property type="match status" value="1"/>
</dbReference>
<dbReference type="FunFam" id="2.10.25.10:FF:000315">
    <property type="entry name" value="Laminin subunit alpha 2"/>
    <property type="match status" value="1"/>
</dbReference>
<dbReference type="FunFam" id="2.60.120.200:FF:000052">
    <property type="entry name" value="Laminin subunit alpha 2"/>
    <property type="match status" value="1"/>
</dbReference>
<dbReference type="FunFam" id="2.60.120.200:FF:000057">
    <property type="entry name" value="Laminin subunit alpha 2"/>
    <property type="match status" value="1"/>
</dbReference>
<dbReference type="FunFam" id="2.60.120.200:FF:000061">
    <property type="entry name" value="Laminin subunit alpha 2"/>
    <property type="match status" value="1"/>
</dbReference>
<dbReference type="FunFam" id="2.60.120.200:FF:000063">
    <property type="entry name" value="Laminin subunit alpha 2"/>
    <property type="match status" value="1"/>
</dbReference>
<dbReference type="FunFam" id="2.60.120.200:FF:000065">
    <property type="entry name" value="Laminin subunit alpha 2"/>
    <property type="match status" value="1"/>
</dbReference>
<dbReference type="FunFam" id="2.60.120.260:FF:000017">
    <property type="entry name" value="Laminin subunit alpha 2"/>
    <property type="match status" value="1"/>
</dbReference>
<dbReference type="FunFam" id="2.10.25.10:FF:000051">
    <property type="entry name" value="Laminin subunit alpha 4"/>
    <property type="match status" value="1"/>
</dbReference>
<dbReference type="FunFam" id="2.10.25.10:FF:000094">
    <property type="entry name" value="Laminin subunit alpha-2"/>
    <property type="match status" value="1"/>
</dbReference>
<dbReference type="FunFam" id="2.10.25.10:FF:000128">
    <property type="entry name" value="laminin subunit alpha-2 isoform X1"/>
    <property type="match status" value="2"/>
</dbReference>
<dbReference type="FunFam" id="2.10.25.10:FF:000461">
    <property type="entry name" value="laminin subunit alpha-2 isoform X1"/>
    <property type="match status" value="1"/>
</dbReference>
<dbReference type="Gene3D" id="2.60.120.200">
    <property type="match status" value="5"/>
</dbReference>
<dbReference type="Gene3D" id="2.60.120.260">
    <property type="entry name" value="Galactose-binding domain-like"/>
    <property type="match status" value="1"/>
</dbReference>
<dbReference type="Gene3D" id="2.10.25.10">
    <property type="entry name" value="Laminin"/>
    <property type="match status" value="15"/>
</dbReference>
<dbReference type="InterPro" id="IPR013320">
    <property type="entry name" value="ConA-like_dom_sf"/>
</dbReference>
<dbReference type="InterPro" id="IPR000742">
    <property type="entry name" value="EGF-like_dom"/>
</dbReference>
<dbReference type="InterPro" id="IPR009030">
    <property type="entry name" value="Growth_fac_rcpt_cys_sf"/>
</dbReference>
<dbReference type="InterPro" id="IPR050440">
    <property type="entry name" value="Laminin/Netrin_ECM"/>
</dbReference>
<dbReference type="InterPro" id="IPR009254">
    <property type="entry name" value="Laminin_aI"/>
</dbReference>
<dbReference type="InterPro" id="IPR010307">
    <property type="entry name" value="Laminin_dom_II"/>
</dbReference>
<dbReference type="InterPro" id="IPR001791">
    <property type="entry name" value="Laminin_G"/>
</dbReference>
<dbReference type="InterPro" id="IPR000034">
    <property type="entry name" value="Laminin_IV"/>
</dbReference>
<dbReference type="InterPro" id="IPR008211">
    <property type="entry name" value="Laminin_N"/>
</dbReference>
<dbReference type="InterPro" id="IPR002049">
    <property type="entry name" value="LE_dom"/>
</dbReference>
<dbReference type="InterPro" id="IPR056863">
    <property type="entry name" value="LMN_ATRN_NET-like_EGF"/>
</dbReference>
<dbReference type="PANTHER" id="PTHR10574:SF291">
    <property type="entry name" value="LAMININ SUBUNIT ALPHA-2"/>
    <property type="match status" value="1"/>
</dbReference>
<dbReference type="PANTHER" id="PTHR10574">
    <property type="entry name" value="NETRIN/LAMININ-RELATED"/>
    <property type="match status" value="1"/>
</dbReference>
<dbReference type="Pfam" id="PF00053">
    <property type="entry name" value="EGF_laminin"/>
    <property type="match status" value="13"/>
</dbReference>
<dbReference type="Pfam" id="PF24973">
    <property type="entry name" value="EGF_LMN_ATRN"/>
    <property type="match status" value="2"/>
</dbReference>
<dbReference type="Pfam" id="PF00052">
    <property type="entry name" value="Laminin_B"/>
    <property type="match status" value="2"/>
</dbReference>
<dbReference type="Pfam" id="PF00054">
    <property type="entry name" value="Laminin_G_1"/>
    <property type="match status" value="4"/>
</dbReference>
<dbReference type="Pfam" id="PF02210">
    <property type="entry name" value="Laminin_G_2"/>
    <property type="match status" value="1"/>
</dbReference>
<dbReference type="Pfam" id="PF06008">
    <property type="entry name" value="Laminin_I"/>
    <property type="match status" value="1"/>
</dbReference>
<dbReference type="Pfam" id="PF06009">
    <property type="entry name" value="Laminin_II"/>
    <property type="match status" value="1"/>
</dbReference>
<dbReference type="Pfam" id="PF00055">
    <property type="entry name" value="Laminin_N"/>
    <property type="match status" value="1"/>
</dbReference>
<dbReference type="PRINTS" id="PR00011">
    <property type="entry name" value="EGFLAMININ"/>
</dbReference>
<dbReference type="SMART" id="SM00181">
    <property type="entry name" value="EGF"/>
    <property type="match status" value="11"/>
</dbReference>
<dbReference type="SMART" id="SM00180">
    <property type="entry name" value="EGF_Lam"/>
    <property type="match status" value="16"/>
</dbReference>
<dbReference type="SMART" id="SM00281">
    <property type="entry name" value="LamB"/>
    <property type="match status" value="2"/>
</dbReference>
<dbReference type="SMART" id="SM00282">
    <property type="entry name" value="LamG"/>
    <property type="match status" value="5"/>
</dbReference>
<dbReference type="SMART" id="SM00136">
    <property type="entry name" value="LamNT"/>
    <property type="match status" value="1"/>
</dbReference>
<dbReference type="SUPFAM" id="SSF49899">
    <property type="entry name" value="Concanavalin A-like lectins/glucanases"/>
    <property type="match status" value="5"/>
</dbReference>
<dbReference type="SUPFAM" id="SSF57196">
    <property type="entry name" value="EGF/Laminin"/>
    <property type="match status" value="11"/>
</dbReference>
<dbReference type="SUPFAM" id="SSF57184">
    <property type="entry name" value="Growth factor receptor domain"/>
    <property type="match status" value="1"/>
</dbReference>
<dbReference type="SUPFAM" id="SSF58104">
    <property type="entry name" value="Methyl-accepting chemotaxis protein (MCP) signaling domain"/>
    <property type="match status" value="1"/>
</dbReference>
<dbReference type="PROSITE" id="PS00022">
    <property type="entry name" value="EGF_1"/>
    <property type="match status" value="11"/>
</dbReference>
<dbReference type="PROSITE" id="PS01186">
    <property type="entry name" value="EGF_2"/>
    <property type="match status" value="3"/>
</dbReference>
<dbReference type="PROSITE" id="PS01248">
    <property type="entry name" value="EGF_LAM_1"/>
    <property type="match status" value="14"/>
</dbReference>
<dbReference type="PROSITE" id="PS50027">
    <property type="entry name" value="EGF_LAM_2"/>
    <property type="match status" value="16"/>
</dbReference>
<dbReference type="PROSITE" id="PS50025">
    <property type="entry name" value="LAM_G_DOMAIN"/>
    <property type="match status" value="5"/>
</dbReference>
<dbReference type="PROSITE" id="PS51115">
    <property type="entry name" value="LAMININ_IVA"/>
    <property type="match status" value="2"/>
</dbReference>
<dbReference type="PROSITE" id="PS51117">
    <property type="entry name" value="LAMININ_NTER"/>
    <property type="match status" value="1"/>
</dbReference>
<accession>Q60675</accession>
<accession>F8VQ43</accession>
<accession>Q05003</accession>
<accession>Q64061</accession>
<comment type="function">
    <text>Binding to cells via a high affinity receptor, laminin is thought to mediate the attachment, migration and organization of cells into tissues during embryonic development by interacting with other extracellular matrix components.</text>
</comment>
<comment type="subunit">
    <text evidence="7">Laminin is a complex glycoprotein, consisting of three different polypeptide chains (alpha, beta, gamma), which are bound to each other by disulfide bonds into a cross-shaped molecule comprising one long and three short arms with globules at each end. Alpha-2 is a subunit of laminin-2 (laminin-211 or merosin), laminin-4 (laminin-221 or S-merosin) and laminin-12 (laminin-213). Interacts with FBLN1, FBLN2 and NID2.</text>
</comment>
<comment type="subcellular location">
    <subcellularLocation>
        <location>Secreted</location>
        <location>Extracellular space</location>
        <location>Extracellular matrix</location>
        <location>Basement membrane</location>
    </subcellularLocation>
    <text>Major component.</text>
</comment>
<comment type="domain">
    <text>The alpha-helical domains I and II are thought to interact with other laminin chains to form a coiled coil structure.</text>
</comment>
<comment type="domain">
    <text>Domains VI, IV and G are globular.</text>
</comment>
<comment type="disease">
    <text>Defects in Lama2 are a cause of murine muscular dystrophy (dy2J).</text>
</comment>
<comment type="sequence caution" evidence="9">
    <conflict type="frameshift">
        <sequence resource="EMBL-CDS" id="AAC52165"/>
    </conflict>
</comment>
<proteinExistence type="evidence at protein level"/>
<protein>
    <recommendedName>
        <fullName>Laminin subunit alpha-2</fullName>
    </recommendedName>
    <alternativeName>
        <fullName>Laminin M chain</fullName>
    </alternativeName>
    <alternativeName>
        <fullName>Laminin-12 subunit alpha</fullName>
    </alternativeName>
    <alternativeName>
        <fullName>Laminin-2 subunit alpha</fullName>
    </alternativeName>
    <alternativeName>
        <fullName>Laminin-4 subunit alpha</fullName>
    </alternativeName>
    <alternativeName>
        <fullName>Merosin heavy chain</fullName>
    </alternativeName>
</protein>
<feature type="signal peptide" evidence="8">
    <location>
        <begin position="1"/>
        <end position="19"/>
    </location>
</feature>
<feature type="chain" id="PRO_0000017057" description="Laminin subunit alpha-2">
    <location>
        <begin position="20"/>
        <end position="3118"/>
    </location>
</feature>
<feature type="domain" description="Laminin N-terminal" evidence="6">
    <location>
        <begin position="31"/>
        <end position="282"/>
    </location>
</feature>
<feature type="domain" description="Laminin EGF-like 1" evidence="5">
    <location>
        <begin position="283"/>
        <end position="339"/>
    </location>
</feature>
<feature type="domain" description="Laminin EGF-like 2" evidence="5">
    <location>
        <begin position="340"/>
        <end position="409"/>
    </location>
</feature>
<feature type="domain" description="Laminin EGF-like 3" evidence="5">
    <location>
        <begin position="410"/>
        <end position="464"/>
    </location>
</feature>
<feature type="domain" description="Laminin EGF-like 4" evidence="5">
    <location>
        <begin position="465"/>
        <end position="513"/>
    </location>
</feature>
<feature type="domain" description="Laminin EGF-like 5; first part" evidence="5">
    <location>
        <begin position="514"/>
        <end position="523"/>
    </location>
</feature>
<feature type="domain" description="Laminin IV type A 1" evidence="4">
    <location>
        <begin position="527"/>
        <end position="719"/>
    </location>
</feature>
<feature type="domain" description="Laminin EGF-like 5; second part" evidence="5">
    <location>
        <begin position="720"/>
        <end position="752"/>
    </location>
</feature>
<feature type="domain" description="Laminin EGF-like 6" evidence="5">
    <location>
        <begin position="753"/>
        <end position="802"/>
    </location>
</feature>
<feature type="domain" description="Laminin EGF-like 7" evidence="5">
    <location>
        <begin position="803"/>
        <end position="860"/>
    </location>
</feature>
<feature type="domain" description="Laminin EGF-like 8" evidence="5">
    <location>
        <begin position="861"/>
        <end position="913"/>
    </location>
</feature>
<feature type="domain" description="Laminin EGF-like 9" evidence="5">
    <location>
        <begin position="914"/>
        <end position="962"/>
    </location>
</feature>
<feature type="domain" description="Laminin EGF-like 10" evidence="5">
    <location>
        <begin position="963"/>
        <end position="1009"/>
    </location>
</feature>
<feature type="domain" description="Laminin EGF-like 11" evidence="5">
    <location>
        <begin position="1010"/>
        <end position="1055"/>
    </location>
</feature>
<feature type="domain" description="Laminin EGF-like 12" evidence="5">
    <location>
        <begin position="1056"/>
        <end position="1101"/>
    </location>
</feature>
<feature type="domain" description="Laminin EGF-like 13" evidence="5">
    <location>
        <begin position="1102"/>
        <end position="1161"/>
    </location>
</feature>
<feature type="domain" description="Laminin EGF-like 14; first part" evidence="5">
    <location>
        <begin position="1162"/>
        <end position="1171"/>
    </location>
</feature>
<feature type="domain" description="Laminin IV type A 2" evidence="4">
    <location>
        <begin position="1172"/>
        <end position="1375"/>
    </location>
</feature>
<feature type="domain" description="Laminin EGF-like 14; second part" evidence="5">
    <location>
        <begin position="1376"/>
        <end position="1415"/>
    </location>
</feature>
<feature type="domain" description="Laminin EGF-like 15" evidence="5">
    <location>
        <begin position="1416"/>
        <end position="1464"/>
    </location>
</feature>
<feature type="domain" description="Laminin EGF-like 16" evidence="5">
    <location>
        <begin position="1465"/>
        <end position="1522"/>
    </location>
</feature>
<feature type="domain" description="Laminin EGF-like 17" evidence="5">
    <location>
        <begin position="1523"/>
        <end position="1569"/>
    </location>
</feature>
<feature type="domain" description="Laminin G-like 1" evidence="3">
    <location>
        <begin position="2141"/>
        <end position="2324"/>
    </location>
</feature>
<feature type="domain" description="Laminin G-like 2" evidence="3">
    <location>
        <begin position="2336"/>
        <end position="2517"/>
    </location>
</feature>
<feature type="domain" description="Laminin G-like 3" evidence="3">
    <location>
        <begin position="2522"/>
        <end position="2706"/>
    </location>
</feature>
<feature type="domain" description="Laminin G-like 4" evidence="3">
    <location>
        <begin position="2759"/>
        <end position="2930"/>
    </location>
</feature>
<feature type="domain" description="Laminin G-like 5" evidence="3">
    <location>
        <begin position="2929"/>
        <end position="3115"/>
    </location>
</feature>
<feature type="region of interest" description="Domain II and I">
    <location>
        <begin position="1570"/>
        <end position="2140"/>
    </location>
</feature>
<feature type="coiled-coil region" evidence="2">
    <location>
        <begin position="1662"/>
        <end position="1863"/>
    </location>
</feature>
<feature type="coiled-coil region" evidence="2">
    <location>
        <begin position="1923"/>
        <end position="2146"/>
    </location>
</feature>
<feature type="glycosylation site" description="N-linked (GlcNAc...) asparagine" evidence="2">
    <location>
        <position position="51"/>
    </location>
</feature>
<feature type="glycosylation site" description="N-linked (GlcNAc...) asparagine" evidence="2">
    <location>
        <position position="85"/>
    </location>
</feature>
<feature type="glycosylation site" description="N-linked (GlcNAc...) asparagine" evidence="2">
    <location>
        <position position="299"/>
    </location>
</feature>
<feature type="glycosylation site" description="N-linked (GlcNAc...) asparagine" evidence="2">
    <location>
        <position position="359"/>
    </location>
</feature>
<feature type="glycosylation site" description="N-linked (GlcNAc...) asparagine" evidence="2">
    <location>
        <position position="376"/>
    </location>
</feature>
<feature type="glycosylation site" description="N-linked (GlcNAc...) asparagine" evidence="2">
    <location>
        <position position="466"/>
    </location>
</feature>
<feature type="glycosylation site" description="N-linked (GlcNAc...) asparagine" evidence="2">
    <location>
        <position position="742"/>
    </location>
</feature>
<feature type="glycosylation site" description="N-linked (GlcNAc...) asparagine" evidence="2">
    <location>
        <position position="919"/>
    </location>
</feature>
<feature type="glycosylation site" description="N-linked (GlcNAc...) asparagine" evidence="2">
    <location>
        <position position="1031"/>
    </location>
</feature>
<feature type="glycosylation site" description="N-linked (GlcNAc...) asparagine" evidence="2">
    <location>
        <position position="1057"/>
    </location>
</feature>
<feature type="glycosylation site" description="N-linked (GlcNAc...) asparagine" evidence="2">
    <location>
        <position position="1593"/>
    </location>
</feature>
<feature type="glycosylation site" description="N-linked (GlcNAc...) asparagine" evidence="2">
    <location>
        <position position="1610"/>
    </location>
</feature>
<feature type="glycosylation site" description="N-linked (GlcNAc...) asparagine" evidence="2">
    <location>
        <position position="1696"/>
    </location>
</feature>
<feature type="glycosylation site" description="N-linked (GlcNAc...) asparagine" evidence="2">
    <location>
        <position position="1806"/>
    </location>
</feature>
<feature type="glycosylation site" description="N-linked (GlcNAc...) asparagine" evidence="2">
    <location>
        <position position="1897"/>
    </location>
</feature>
<feature type="glycosylation site" description="N-linked (GlcNAc...) asparagine" evidence="2">
    <location>
        <position position="1912"/>
    </location>
</feature>
<feature type="glycosylation site" description="N-linked (GlcNAc...) asparagine" evidence="2">
    <location>
        <position position="1916"/>
    </location>
</feature>
<feature type="glycosylation site" description="N-linked (GlcNAc...) asparagine" evidence="2">
    <location>
        <position position="2013"/>
    </location>
</feature>
<feature type="glycosylation site" description="N-linked (GlcNAc...) asparagine" evidence="2">
    <location>
        <position position="2024"/>
    </location>
</feature>
<feature type="glycosylation site" description="N-linked (GlcNAc...) asparagine" evidence="2">
    <location>
        <position position="2041"/>
    </location>
</feature>
<feature type="glycosylation site" description="N-linked (GlcNAc...) asparagine" evidence="2">
    <location>
        <position position="2122"/>
    </location>
</feature>
<feature type="glycosylation site" description="N-linked (GlcNAc...) asparagine" evidence="2">
    <location>
        <position position="2236"/>
    </location>
</feature>
<feature type="glycosylation site" description="N-linked (GlcNAc...) asparagine" evidence="2">
    <location>
        <position position="2356"/>
    </location>
</feature>
<feature type="glycosylation site" description="N-linked (GlcNAc...) asparagine" evidence="2">
    <location>
        <position position="2431"/>
    </location>
</feature>
<feature type="glycosylation site" description="N-linked (GlcNAc...) asparagine" evidence="2">
    <location>
        <position position="2474"/>
    </location>
</feature>
<feature type="glycosylation site" description="N-linked (GlcNAc...) asparagine" evidence="2">
    <location>
        <position position="2547"/>
    </location>
</feature>
<feature type="glycosylation site" description="N-linked (GlcNAc...) asparagine" evidence="2">
    <location>
        <position position="2554"/>
    </location>
</feature>
<feature type="glycosylation site" description="N-linked (GlcNAc...) asparagine" evidence="2">
    <location>
        <position position="2644"/>
    </location>
</feature>
<feature type="glycosylation site" description="N-linked (GlcNAc...) asparagine" evidence="2">
    <location>
        <position position="2889"/>
    </location>
</feature>
<feature type="disulfide bond" evidence="1">
    <location>
        <begin position="283"/>
        <end position="292"/>
    </location>
</feature>
<feature type="disulfide bond" evidence="1">
    <location>
        <begin position="285"/>
        <end position="303"/>
    </location>
</feature>
<feature type="disulfide bond" evidence="1">
    <location>
        <begin position="305"/>
        <end position="314"/>
    </location>
</feature>
<feature type="disulfide bond" evidence="1">
    <location>
        <begin position="317"/>
        <end position="337"/>
    </location>
</feature>
<feature type="disulfide bond" evidence="1">
    <location>
        <begin position="340"/>
        <end position="349"/>
    </location>
</feature>
<feature type="disulfide bond" evidence="1">
    <location>
        <begin position="342"/>
        <end position="374"/>
    </location>
</feature>
<feature type="disulfide bond" evidence="1">
    <location>
        <begin position="377"/>
        <end position="386"/>
    </location>
</feature>
<feature type="disulfide bond" evidence="1">
    <location>
        <begin position="389"/>
        <end position="407"/>
    </location>
</feature>
<feature type="disulfide bond" evidence="1">
    <location>
        <begin position="410"/>
        <end position="422"/>
    </location>
</feature>
<feature type="disulfide bond" evidence="1">
    <location>
        <begin position="412"/>
        <end position="438"/>
    </location>
</feature>
<feature type="disulfide bond" evidence="1">
    <location>
        <begin position="440"/>
        <end position="449"/>
    </location>
</feature>
<feature type="disulfide bond" evidence="1">
    <location>
        <begin position="452"/>
        <end position="462"/>
    </location>
</feature>
<feature type="disulfide bond" evidence="1">
    <location>
        <begin position="465"/>
        <end position="478"/>
    </location>
</feature>
<feature type="disulfide bond" evidence="1">
    <location>
        <begin position="467"/>
        <end position="482"/>
    </location>
</feature>
<feature type="disulfide bond" evidence="1">
    <location>
        <begin position="484"/>
        <end position="493"/>
    </location>
</feature>
<feature type="disulfide bond" evidence="1">
    <location>
        <begin position="496"/>
        <end position="511"/>
    </location>
</feature>
<feature type="disulfide bond" evidence="1">
    <location>
        <begin position="753"/>
        <end position="762"/>
    </location>
</feature>
<feature type="disulfide bond" evidence="1">
    <location>
        <begin position="755"/>
        <end position="769"/>
    </location>
</feature>
<feature type="disulfide bond" evidence="1">
    <location>
        <begin position="772"/>
        <end position="781"/>
    </location>
</feature>
<feature type="disulfide bond" evidence="1">
    <location>
        <begin position="784"/>
        <end position="800"/>
    </location>
</feature>
<feature type="disulfide bond" evidence="1">
    <location>
        <begin position="803"/>
        <end position="818"/>
    </location>
</feature>
<feature type="disulfide bond" evidence="1">
    <location>
        <begin position="805"/>
        <end position="828"/>
    </location>
</feature>
<feature type="disulfide bond" evidence="1">
    <location>
        <begin position="831"/>
        <end position="840"/>
    </location>
</feature>
<feature type="disulfide bond" evidence="1">
    <location>
        <begin position="843"/>
        <end position="858"/>
    </location>
</feature>
<feature type="disulfide bond" evidence="1">
    <location>
        <begin position="861"/>
        <end position="875"/>
    </location>
</feature>
<feature type="disulfide bond" evidence="1">
    <location>
        <begin position="863"/>
        <end position="882"/>
    </location>
</feature>
<feature type="disulfide bond" evidence="1">
    <location>
        <begin position="885"/>
        <end position="894"/>
    </location>
</feature>
<feature type="disulfide bond" evidence="1">
    <location>
        <begin position="897"/>
        <end position="911"/>
    </location>
</feature>
<feature type="disulfide bond" evidence="1">
    <location>
        <begin position="914"/>
        <end position="926"/>
    </location>
</feature>
<feature type="disulfide bond" evidence="1">
    <location>
        <begin position="916"/>
        <end position="933"/>
    </location>
</feature>
<feature type="disulfide bond" evidence="1">
    <location>
        <begin position="935"/>
        <end position="944"/>
    </location>
</feature>
<feature type="disulfide bond" evidence="1">
    <location>
        <begin position="947"/>
        <end position="960"/>
    </location>
</feature>
<feature type="disulfide bond" evidence="1">
    <location>
        <begin position="963"/>
        <end position="975"/>
    </location>
</feature>
<feature type="disulfide bond" evidence="1">
    <location>
        <begin position="965"/>
        <end position="981"/>
    </location>
</feature>
<feature type="disulfide bond" evidence="1">
    <location>
        <begin position="983"/>
        <end position="992"/>
    </location>
</feature>
<feature type="disulfide bond" evidence="1">
    <location>
        <begin position="995"/>
        <end position="1007"/>
    </location>
</feature>
<feature type="disulfide bond" evidence="1">
    <location>
        <begin position="1010"/>
        <end position="1019"/>
    </location>
</feature>
<feature type="disulfide bond" evidence="1">
    <location>
        <begin position="1012"/>
        <end position="1026"/>
    </location>
</feature>
<feature type="disulfide bond" evidence="1">
    <location>
        <begin position="1028"/>
        <end position="1037"/>
    </location>
</feature>
<feature type="disulfide bond" evidence="1">
    <location>
        <begin position="1040"/>
        <end position="1053"/>
    </location>
</feature>
<feature type="disulfide bond" evidence="1">
    <location>
        <begin position="1056"/>
        <end position="1068"/>
    </location>
</feature>
<feature type="disulfide bond" evidence="1">
    <location>
        <begin position="1058"/>
        <end position="1075"/>
    </location>
</feature>
<feature type="disulfide bond" evidence="1">
    <location>
        <begin position="1077"/>
        <end position="1086"/>
    </location>
</feature>
<feature type="disulfide bond" evidence="1">
    <location>
        <begin position="1089"/>
        <end position="1099"/>
    </location>
</feature>
<feature type="disulfide bond" evidence="1">
    <location>
        <begin position="1102"/>
        <end position="1114"/>
    </location>
</feature>
<feature type="disulfide bond" evidence="1">
    <location>
        <begin position="1104"/>
        <end position="1130"/>
    </location>
</feature>
<feature type="disulfide bond" evidence="1">
    <location>
        <begin position="1132"/>
        <end position="1141"/>
    </location>
</feature>
<feature type="disulfide bond" evidence="1">
    <location>
        <begin position="1144"/>
        <end position="1159"/>
    </location>
</feature>
<feature type="disulfide bond" evidence="1">
    <location>
        <begin position="1378"/>
        <end position="1387"/>
    </location>
</feature>
<feature type="disulfide bond" evidence="1">
    <location>
        <begin position="1416"/>
        <end position="1425"/>
    </location>
</feature>
<feature type="disulfide bond" evidence="1">
    <location>
        <begin position="1418"/>
        <end position="1432"/>
    </location>
</feature>
<feature type="disulfide bond" evidence="1">
    <location>
        <begin position="1435"/>
        <end position="1444"/>
    </location>
</feature>
<feature type="disulfide bond" evidence="1">
    <location>
        <begin position="1447"/>
        <end position="1462"/>
    </location>
</feature>
<feature type="disulfide bond" evidence="1">
    <location>
        <begin position="1465"/>
        <end position="1480"/>
    </location>
</feature>
<feature type="disulfide bond" evidence="1">
    <location>
        <begin position="1467"/>
        <end position="1490"/>
    </location>
</feature>
<feature type="disulfide bond" evidence="1">
    <location>
        <begin position="1493"/>
        <end position="1502"/>
    </location>
</feature>
<feature type="disulfide bond" evidence="1">
    <location>
        <begin position="1505"/>
        <end position="1520"/>
    </location>
</feature>
<feature type="disulfide bond" evidence="1">
    <location>
        <begin position="1523"/>
        <end position="1535"/>
    </location>
</feature>
<feature type="disulfide bond" evidence="1">
    <location>
        <begin position="1525"/>
        <end position="1542"/>
    </location>
</feature>
<feature type="disulfide bond" evidence="1">
    <location>
        <begin position="1544"/>
        <end position="1553"/>
    </location>
</feature>
<feature type="disulfide bond" evidence="1">
    <location>
        <begin position="1556"/>
        <end position="1567"/>
    </location>
</feature>
<feature type="disulfide bond" description="Interchain" evidence="9">
    <location>
        <position position="1570"/>
    </location>
</feature>
<feature type="disulfide bond" description="Interchain" evidence="9">
    <location>
        <position position="1574"/>
    </location>
</feature>
<feature type="disulfide bond" evidence="1">
    <location>
        <begin position="2298"/>
        <end position="2324"/>
    </location>
</feature>
<feature type="disulfide bond" evidence="1">
    <location>
        <begin position="2491"/>
        <end position="2517"/>
    </location>
</feature>
<feature type="disulfide bond" evidence="1">
    <location>
        <begin position="2679"/>
        <end position="2706"/>
    </location>
</feature>
<feature type="disulfide bond" evidence="1">
    <location>
        <begin position="2905"/>
        <end position="2930"/>
    </location>
</feature>
<feature type="disulfide bond" evidence="1">
    <location>
        <begin position="3083"/>
        <end position="3115"/>
    </location>
</feature>
<feature type="sequence conflict" description="In Ref. 1; AAC52165." evidence="9" ref="1">
    <original>I</original>
    <variation>L</variation>
    <location>
        <position position="616"/>
    </location>
</feature>
<feature type="sequence conflict" description="In Ref. 1; AAC52165." evidence="9" ref="1">
    <original>I</original>
    <variation>V</variation>
    <location>
        <position position="646"/>
    </location>
</feature>
<feature type="sequence conflict" description="In Ref. 1; AAC52165." evidence="9" ref="1">
    <original>ERVLM</original>
    <variation>GEILI</variation>
    <location>
        <begin position="678"/>
        <end position="682"/>
    </location>
</feature>
<feature type="sequence conflict" description="In Ref. 1; AAC52165." evidence="9" ref="1">
    <original>A</original>
    <variation>P</variation>
    <location>
        <position position="704"/>
    </location>
</feature>
<feature type="sequence conflict" description="In Ref. 1; AAC52165." evidence="9" ref="1">
    <original>I</original>
    <variation>V</variation>
    <location>
        <position position="853"/>
    </location>
</feature>
<feature type="sequence conflict" description="In Ref. 1; AAC52165." evidence="9" ref="1">
    <original>A</original>
    <variation>T</variation>
    <location>
        <position position="908"/>
    </location>
</feature>
<feature type="sequence conflict" description="In Ref. 1; AAC52165." evidence="9" ref="1">
    <original>N</original>
    <variation>D</variation>
    <location>
        <position position="917"/>
    </location>
</feature>
<feature type="sequence conflict" description="In Ref. 1; AAC52165." evidence="9" ref="1">
    <original>I</original>
    <variation>D</variation>
    <location>
        <position position="925"/>
    </location>
</feature>
<feature type="sequence conflict" description="In Ref. 1; AAC52165." evidence="9" ref="1">
    <original>Q</original>
    <variation>K</variation>
    <location>
        <position position="1694"/>
    </location>
</feature>
<feature type="sequence conflict" description="In Ref. 1; AAC52165." evidence="9" ref="1">
    <original>R</original>
    <variation>Q</variation>
    <location>
        <position position="1840"/>
    </location>
</feature>
<feature type="sequence conflict" description="In Ref. 1; AAC52165." evidence="9" ref="1">
    <original>D</original>
    <variation>I</variation>
    <location>
        <position position="2205"/>
    </location>
</feature>
<feature type="sequence conflict" description="In Ref. 1; AAC52165." evidence="9" ref="1">
    <original>EY</original>
    <variation>GF</variation>
    <location>
        <begin position="2214"/>
        <end position="2215"/>
    </location>
</feature>
<feature type="sequence conflict" description="In Ref. 1; AAC52165." evidence="9" ref="1">
    <original>Y</original>
    <variation>N</variation>
    <location>
        <position position="2523"/>
    </location>
</feature>
<feature type="sequence conflict" description="In Ref. 1; AAC52165." evidence="9" ref="1">
    <original>M</original>
    <variation>I</variation>
    <location>
        <position position="2642"/>
    </location>
</feature>
<feature type="sequence conflict" description="In Ref. 1; AAC52165." evidence="9" ref="1">
    <original>P</original>
    <variation>S</variation>
    <location>
        <position position="2729"/>
    </location>
</feature>
<feature type="sequence conflict" description="In Ref. 1; AAC52165." evidence="9" ref="1">
    <original>A</original>
    <variation>V</variation>
    <location>
        <position position="2739"/>
    </location>
</feature>
<feature type="sequence conflict" description="In Ref. 1; AAC52165." evidence="9" ref="1">
    <original>A</original>
    <variation>V</variation>
    <location>
        <position position="2773"/>
    </location>
</feature>
<feature type="sequence conflict" description="In Ref. 1; AAC52165." evidence="9" ref="1">
    <original>A</original>
    <variation>G</variation>
    <location>
        <position position="2802"/>
    </location>
</feature>
<feature type="sequence conflict" description="In Ref. 1; AAC52165." evidence="9" ref="1">
    <original>A</original>
    <variation>G</variation>
    <location>
        <position position="2810"/>
    </location>
</feature>
<feature type="sequence conflict" description="In Ref. 1; AAC52165." evidence="9" ref="1">
    <original>Y</original>
    <variation>F</variation>
    <location>
        <position position="2820"/>
    </location>
</feature>
<feature type="sequence conflict" description="In Ref. 1; AAC52165." evidence="9" ref="1">
    <original>DTS</original>
    <variation>STR</variation>
    <location>
        <begin position="2829"/>
        <end position="2831"/>
    </location>
</feature>
<feature type="sequence conflict" description="In Ref. 1; AAC52165." evidence="9" ref="1">
    <original>V</original>
    <variation>G</variation>
    <location>
        <position position="2878"/>
    </location>
</feature>
<feature type="sequence conflict" description="In Ref. 1; AAC52165." evidence="9" ref="1">
    <original>A</original>
    <variation>G</variation>
    <location>
        <position position="2946"/>
    </location>
</feature>
<feature type="sequence conflict" description="In Ref. 1; AAC52165." evidence="9" ref="1">
    <original>K</original>
    <variation>I</variation>
    <location>
        <position position="2953"/>
    </location>
</feature>
<feature type="sequence conflict" description="In Ref. 1; AAC52165." evidence="9" ref="1">
    <original>V</original>
    <variation>I</variation>
    <location>
        <position position="2976"/>
    </location>
</feature>
<feature type="sequence conflict" description="In Ref. 1; AAC52165." evidence="9" ref="1">
    <original>G</original>
    <variation>E</variation>
    <location>
        <position position="3011"/>
    </location>
</feature>
<feature type="sequence conflict" description="In Ref. 1; AAC52165." evidence="9" ref="1">
    <original>H</original>
    <variation>Y</variation>
    <location>
        <position position="3022"/>
    </location>
</feature>
<feature type="strand" evidence="12">
    <location>
        <begin position="2151"/>
        <end position="2154"/>
    </location>
</feature>
<feature type="strand" evidence="12">
    <location>
        <begin position="2163"/>
        <end position="2173"/>
    </location>
</feature>
<feature type="strand" evidence="12">
    <location>
        <begin position="2177"/>
        <end position="2183"/>
    </location>
</feature>
<feature type="strand" evidence="12">
    <location>
        <begin position="2190"/>
        <end position="2196"/>
    </location>
</feature>
<feature type="strand" evidence="12">
    <location>
        <begin position="2199"/>
        <end position="2208"/>
    </location>
</feature>
<feature type="strand" evidence="12">
    <location>
        <begin position="2210"/>
        <end position="2214"/>
    </location>
</feature>
<feature type="strand" evidence="12">
    <location>
        <begin position="2226"/>
        <end position="2233"/>
    </location>
</feature>
<feature type="strand" evidence="12">
    <location>
        <begin position="2236"/>
        <end position="2246"/>
    </location>
</feature>
<feature type="turn" evidence="12">
    <location>
        <begin position="2247"/>
        <end position="2250"/>
    </location>
</feature>
<feature type="strand" evidence="12">
    <location>
        <begin position="2256"/>
        <end position="2259"/>
    </location>
</feature>
<feature type="strand" evidence="12">
    <location>
        <begin position="2274"/>
        <end position="2279"/>
    </location>
</feature>
<feature type="strand" evidence="12">
    <location>
        <begin position="2297"/>
        <end position="2299"/>
    </location>
</feature>
<feature type="strand" evidence="12">
    <location>
        <begin position="2303"/>
        <end position="2308"/>
    </location>
</feature>
<feature type="strand" evidence="12">
    <location>
        <begin position="2316"/>
        <end position="2319"/>
    </location>
</feature>
<feature type="strand" evidence="12">
    <location>
        <begin position="2337"/>
        <end position="2348"/>
    </location>
</feature>
<feature type="strand" evidence="12">
    <location>
        <begin position="2357"/>
        <end position="2367"/>
    </location>
</feature>
<feature type="strand" evidence="12">
    <location>
        <begin position="2369"/>
        <end position="2377"/>
    </location>
</feature>
<feature type="strand" evidence="12">
    <location>
        <begin position="2381"/>
        <end position="2390"/>
    </location>
</feature>
<feature type="strand" evidence="12">
    <location>
        <begin position="2393"/>
        <end position="2399"/>
    </location>
</feature>
<feature type="strand" evidence="12">
    <location>
        <begin position="2404"/>
        <end position="2408"/>
    </location>
</feature>
<feature type="strand" evidence="12">
    <location>
        <begin position="2415"/>
        <end position="2417"/>
    </location>
</feature>
<feature type="strand" evidence="12">
    <location>
        <begin position="2419"/>
        <end position="2426"/>
    </location>
</feature>
<feature type="strand" evidence="12">
    <location>
        <begin position="2429"/>
        <end position="2436"/>
    </location>
</feature>
<feature type="turn" evidence="12">
    <location>
        <begin position="2437"/>
        <end position="2439"/>
    </location>
</feature>
<feature type="strand" evidence="12">
    <location>
        <begin position="2442"/>
        <end position="2448"/>
    </location>
</feature>
<feature type="strand" evidence="12">
    <location>
        <begin position="2463"/>
        <end position="2467"/>
    </location>
</feature>
<feature type="strand" evidence="12">
    <location>
        <begin position="2489"/>
        <end position="2497"/>
    </location>
</feature>
<feature type="strand" evidence="12">
    <location>
        <begin position="2500"/>
        <end position="2502"/>
    </location>
</feature>
<feature type="helix" evidence="12">
    <location>
        <begin position="2504"/>
        <end position="2506"/>
    </location>
</feature>
<feature type="strand" evidence="12">
    <location>
        <begin position="2511"/>
        <end position="2516"/>
    </location>
</feature>
<feature type="strand" evidence="12">
    <location>
        <begin position="2524"/>
        <end position="2526"/>
    </location>
</feature>
<feature type="strand" evidence="12">
    <location>
        <begin position="2528"/>
        <end position="2530"/>
    </location>
</feature>
<feature type="strand" evidence="12">
    <location>
        <begin position="2532"/>
        <end position="2535"/>
    </location>
</feature>
<feature type="strand" evidence="12">
    <location>
        <begin position="2544"/>
        <end position="2553"/>
    </location>
</feature>
<feature type="strand" evidence="12">
    <location>
        <begin position="2555"/>
        <end position="2562"/>
    </location>
</feature>
<feature type="strand" evidence="12">
    <location>
        <begin position="2581"/>
        <end position="2587"/>
    </location>
</feature>
<feature type="strand" evidence="12">
    <location>
        <begin position="2590"/>
        <end position="2596"/>
    </location>
</feature>
<feature type="strand" evidence="12">
    <location>
        <begin position="2603"/>
        <end position="2607"/>
    </location>
</feature>
<feature type="strand" evidence="12">
    <location>
        <begin position="2614"/>
        <end position="2618"/>
    </location>
</feature>
<feature type="strand" evidence="12">
    <location>
        <begin position="2620"/>
        <end position="2626"/>
    </location>
</feature>
<feature type="strand" evidence="12">
    <location>
        <begin position="2628"/>
        <end position="2638"/>
    </location>
</feature>
<feature type="strand" evidence="12">
    <location>
        <begin position="2641"/>
        <end position="2644"/>
    </location>
</feature>
<feature type="strand" evidence="12">
    <location>
        <begin position="2656"/>
        <end position="2659"/>
    </location>
</feature>
<feature type="strand" evidence="12">
    <location>
        <begin position="2678"/>
        <end position="2685"/>
    </location>
</feature>
<feature type="strand" evidence="12">
    <location>
        <begin position="2696"/>
        <end position="2700"/>
    </location>
</feature>
<feature type="strand" evidence="10">
    <location>
        <begin position="2760"/>
        <end position="2762"/>
    </location>
</feature>
<feature type="strand" evidence="13">
    <location>
        <begin position="2769"/>
        <end position="2773"/>
    </location>
</feature>
<feature type="helix" evidence="13">
    <location>
        <begin position="2776"/>
        <end position="2779"/>
    </location>
</feature>
<feature type="strand" evidence="13">
    <location>
        <begin position="2780"/>
        <end position="2791"/>
    </location>
</feature>
<feature type="strand" evidence="13">
    <location>
        <begin position="2796"/>
        <end position="2802"/>
    </location>
</feature>
<feature type="strand" evidence="13">
    <location>
        <begin position="2806"/>
        <end position="2815"/>
    </location>
</feature>
<feature type="strand" evidence="13">
    <location>
        <begin position="2818"/>
        <end position="2827"/>
    </location>
</feature>
<feature type="strand" evidence="13">
    <location>
        <begin position="2829"/>
        <end position="2833"/>
    </location>
</feature>
<feature type="strand" evidence="13">
    <location>
        <begin position="2840"/>
        <end position="2842"/>
    </location>
</feature>
<feature type="strand" evidence="13">
    <location>
        <begin position="2844"/>
        <end position="2851"/>
    </location>
</feature>
<feature type="strand" evidence="13">
    <location>
        <begin position="2854"/>
        <end position="2859"/>
    </location>
</feature>
<feature type="strand" evidence="13">
    <location>
        <begin position="2862"/>
        <end position="2867"/>
    </location>
</feature>
<feature type="strand" evidence="13">
    <location>
        <begin position="2869"/>
        <end position="2871"/>
    </location>
</feature>
<feature type="strand" evidence="13">
    <location>
        <begin position="2879"/>
        <end position="2885"/>
    </location>
</feature>
<feature type="strand" evidence="13">
    <location>
        <begin position="2903"/>
        <end position="2914"/>
    </location>
</feature>
<feature type="strand" evidence="13">
    <location>
        <begin position="2922"/>
        <end position="2926"/>
    </location>
</feature>
<feature type="strand" evidence="13">
    <location>
        <begin position="2931"/>
        <end position="2952"/>
    </location>
</feature>
<feature type="strand" evidence="13">
    <location>
        <begin position="2955"/>
        <end position="2969"/>
    </location>
</feature>
<feature type="strand" evidence="13">
    <location>
        <begin position="2971"/>
        <end position="2977"/>
    </location>
</feature>
<feature type="strand" evidence="13">
    <location>
        <begin position="2979"/>
        <end position="2981"/>
    </location>
</feature>
<feature type="strand" evidence="13">
    <location>
        <begin position="2983"/>
        <end position="2989"/>
    </location>
</feature>
<feature type="strand" evidence="13">
    <location>
        <begin position="2992"/>
        <end position="3001"/>
    </location>
</feature>
<feature type="strand" evidence="13">
    <location>
        <begin position="3003"/>
        <end position="3008"/>
    </location>
</feature>
<feature type="helix" evidence="11">
    <location>
        <begin position="3015"/>
        <end position="3017"/>
    </location>
</feature>
<feature type="strand" evidence="13">
    <location>
        <begin position="3018"/>
        <end position="3020"/>
    </location>
</feature>
<feature type="strand" evidence="13">
    <location>
        <begin position="3022"/>
        <end position="3029"/>
    </location>
</feature>
<feature type="strand" evidence="13">
    <location>
        <begin position="3032"/>
        <end position="3037"/>
    </location>
</feature>
<feature type="strand" evidence="13">
    <location>
        <begin position="3040"/>
        <end position="3045"/>
    </location>
</feature>
<feature type="strand" evidence="13">
    <location>
        <begin position="3058"/>
        <end position="3063"/>
    </location>
</feature>
<feature type="strand" evidence="13">
    <location>
        <begin position="3081"/>
        <end position="3094"/>
    </location>
</feature>
<feature type="helix" evidence="13">
    <location>
        <begin position="3101"/>
        <end position="3103"/>
    </location>
</feature>
<feature type="strand" evidence="13">
    <location>
        <begin position="3105"/>
        <end position="3116"/>
    </location>
</feature>
<organism>
    <name type="scientific">Mus musculus</name>
    <name type="common">Mouse</name>
    <dbReference type="NCBI Taxonomy" id="10090"/>
    <lineage>
        <taxon>Eukaryota</taxon>
        <taxon>Metazoa</taxon>
        <taxon>Chordata</taxon>
        <taxon>Craniata</taxon>
        <taxon>Vertebrata</taxon>
        <taxon>Euteleostomi</taxon>
        <taxon>Mammalia</taxon>
        <taxon>Eutheria</taxon>
        <taxon>Euarchontoglires</taxon>
        <taxon>Glires</taxon>
        <taxon>Rodentia</taxon>
        <taxon>Myomorpha</taxon>
        <taxon>Muroidea</taxon>
        <taxon>Muridae</taxon>
        <taxon>Murinae</taxon>
        <taxon>Mus</taxon>
        <taxon>Mus</taxon>
    </lineage>
</organism>
<gene>
    <name type="primary">Lama2</name>
</gene>
<sequence>MPAATAGILLLLLLGTLEGSQTQRRQSQAHQQRGLFPAVLNLASNALITTNATCGEKGPEMYCKLVEHVPGQPVRNPQCRICNQNSSNPYQRHPITNAIDGKNTWWQSPSIKNGVEYHYVTITLDLQQVFQIAYVIVKAANSPRPGNWILERSLDDVEYKPWQYHAVTDTECLTLYNIYPRTGPPSYAKDDEVICTSFYSKIHPLENGEIHISLINGRPSADDPSPELLEFTSARYIRLRFQRIRTLNADLMMFAHKDPREIDPIVTRRYYYSVKDISVGGMCICYGHARACPLDPATNKSRCECEHNTCGESCDRCCPGFHQKPWRAGTFLTKSECEACNCHGKAEECYYDETVASRNLSLNIHGKYIGGGVCINCTHNTAGINCETCVDGFFRPKGVSPNYPRPCQPCHCDPTGSLSEVCVKDEKYAQRGLKPGSCHCKTGFGGVNCDRCVRGYHGYPDCQPCNCSGLGSTNEDPCVGPCSCKENVEGEDCSRCKSGFFNLQEDNQKGCEECFCSGVSNRCQSSYWTYGNIQDMRGWYLTDLSGRIRMAPQLDNPDSPQQISISNSEARKSLLDGYYWSAPPPYLGNRLPAVGGQLSFTISYDLEEEEDDTEKILQLMIIFEGNDLRISTAYKEVYLEPSEEHIEEVSLKEEAFTIHGTNLPVTRKDFMIVLTNLERVLMQITYNLGMDAIFRLSSVNLESAVPYPTDRRIATDVEVCQCPPGYSGSSCETCWPRHRRVNGTIFGGICEPCQCFAHAEACDDITGECLNCKDHTGGPYCNECLPGFYGDPTRGSPEDCQPCACPLNIPSNNFSPTCHLDRSLGLICDECPIGYTGPRCERCAEGYFGQPSIPGGSCQPCQCNDNLDYSIPGSCDSLSGSCLICKPGTTGRYCELCADGYFGDAVNAKNCQPCRCNINGSFSEICHTRTGQCECRPNVQGRHCDECKPETFGLQLGRGCLPCNCNSFGSKSFDCEASGQCWCQPGVAGKKCDRCAHGYFNFQEGGCIACDCSHLGNNCDPKTGQCICPPNTTGEKCSECLPNTWGHSIVTGCKVCNCSTVGSLASQCNVNTGQCSCHPKFSGMKCSECSRGHWNYPLCTLCDCFLPGTDATTCDLETRKCSCSDQTGQCSCKVNVEGVHCDRCRPGKFGLDAKNPLGCSSCYCFGVTSQCSEAKGLIRTWVTLSDEQTILPLVDEALQHTTTKGIAFQKPEIVAKMDEVRQELHLEPFYWKLPQQFEGKKLMAYGGKLKYAIYFEARDETGFATYKPQVIIRGGTPTHARIITRHMAAPLIGQLTRHEIEMTEKEWKYYGDDPRISRTVTREDFLDILYDIHYILIKATYGNVVRQSRISEISMEVAEPGHVLAGSPPAHLIERCDCPPGYSGLSCETCAPGFYRLRSEPGGRTPGPTLGTCVPCQCNGHSSQCDPETSVCQNCQHHTAGDFCERCALGYYGIVRGLPNDCQPCACPLISPSNNFSPSCVLEGLEDYRCTACPRGYEGQYCERCAPGYTGSPSSPGGSCQECECDPYGSLPVPCDRVTGLCTCRPGATGRKCDGCEHWHAREGAECVFCGDECTGLLLGDLARLEQMTMNINLTGPLPAPYKILYGLENTTQELKHLLSPQRAPERLIQLAEGNVNTLVMETNELLTRATKVTADGEQTGQDAERTNSRAESLEEFIKGLVQDAEAINEKAVQLNETLGNQDKTAERNLEELQKEIDRMLKELRSKDLQTQKEVAEDELVAAEGLLKRVNKLFGEPRAQNEDMEKDLQQKLAEYKNKLDDAWDLLREATDKTRDANRLSAANQKNMTILETKKEAIEGSKRQIENTLKEGNDILDEANRLLGEINSVIDYVDDIKTKLPPMSEELSDKIDDLAQEIKDRRLAEKVFQAESHAAQLNDSSAVLDGILDEAKNISFNATAAFRAYSNIKDYIDEAEKVAREAKELAQGATKLATSPQGLLKEDAKGSLQKSFRILNEAKKLANDVKGNHNDLNDLKTRLETADLRNSGLLGALNDTMDKLSAITNDTAAKLQAVKEKAREANDTAKAVLAQVKDLHQNLDGLKQNYNKLADSVAKTNAVVKDPSKNKIIADAGTSVRNLEQEADRLIDKLKPIKELEDNLKKNISEIKELINQARKQANSIKVSVSSGGDCVRTYRPEIKKGSYNNIVVHVKTAVADNLLFYLGSAKFIDFLAIEMRKGKVSFLWDVGSGVGRVEYPDLTIDDSYWYRIEASRTGRNGSISVRALDGPKASMVPSTYHSVSPPGYTILDVDANAMLFVGGLTGKIKKADAVRVITFTGCMGETYFDNKPIGLWNFREKEGDCKGCTVSPQVEDSEGTIQFDGEGYALVSRPIRWYPNISTVMFKFRTFSSSALLMYLATRDLKDFMSVELSDGHVKVSYDLGSGMTSVVSNQNHNDGKWKAFTLSRIQKQANISIVDIDSNQEENVATSSSGNNFGLDLKADDKIYFGGLPTLRNLSMKARPEVNVKKYSGCLKDIEISRTPYNILSSPDYVGVTKGCSLENVYTVSFPKPGFVELAAVSIDVGTEINLSFSTRNESGIILLGSGGTLTPPRRKRRQTTQAYYAIFLNKGRLEVHLSSGTRTMRKIVIKPEPNLFHDGREHSVHVERTRGIFTVQIDEDRRHMQNLTEEQPIEVKKLFVGGAPPEFQPSPLRNIPAFQGCVWNLVINSIPMDFAQPIAFKNADIGRCTYQKPREDESEAVPAEVIVQPQPVPTPAFPFPAPTMVHGPCVAESEPALLTGSKQFGLSRNSHIAIAFDDTKVKNRLTIELEVRTEAESGLLFYMARINHADFATVQLRNGFPYFSYDLGSGDTSTMIPTKINDGQWHKIKIVRVKQEGILYVDDASSQTISPKKADILDVVGILYVGGLPINYTTRRIGPVTYSLDGCVRNLHMEQAPVDLDQPTSSFHVGTCFANAESGTYFDGTGFAKAVGGFKVGLDLLVEFEFRTTRPTGVLLGVSSQKMDGMGIEMIDEKLMFHVDNGAGRFTAIYDAGIPGHMCNGQWHKVTAKKIKNRLELVVDGNQVDAQSPNSASTSADTNDPVFVGGFPGGLNQFGLTTNIRFRGCIRSLKLTKGTGKPLEVNFAKALELRGVQPVSCPTT</sequence>
<name>LAMA2_MOUSE</name>
<evidence type="ECO:0000250" key="1"/>
<evidence type="ECO:0000255" key="2"/>
<evidence type="ECO:0000255" key="3">
    <source>
        <dbReference type="PROSITE-ProRule" id="PRU00122"/>
    </source>
</evidence>
<evidence type="ECO:0000255" key="4">
    <source>
        <dbReference type="PROSITE-ProRule" id="PRU00458"/>
    </source>
</evidence>
<evidence type="ECO:0000255" key="5">
    <source>
        <dbReference type="PROSITE-ProRule" id="PRU00460"/>
    </source>
</evidence>
<evidence type="ECO:0000255" key="6">
    <source>
        <dbReference type="PROSITE-ProRule" id="PRU00466"/>
    </source>
</evidence>
<evidence type="ECO:0000269" key="7">
    <source>
    </source>
</evidence>
<evidence type="ECO:0000269" key="8">
    <source>
    </source>
</evidence>
<evidence type="ECO:0000305" key="9"/>
<evidence type="ECO:0007829" key="10">
    <source>
        <dbReference type="PDB" id="1OKQ"/>
    </source>
</evidence>
<evidence type="ECO:0007829" key="11">
    <source>
        <dbReference type="PDB" id="1QU0"/>
    </source>
</evidence>
<evidence type="ECO:0007829" key="12">
    <source>
        <dbReference type="PDB" id="2WJS"/>
    </source>
</evidence>
<evidence type="ECO:0007829" key="13">
    <source>
        <dbReference type="PDB" id="5IK4"/>
    </source>
</evidence>